<organism>
    <name type="scientific">Illicium oligandrum</name>
    <name type="common">Star anise</name>
    <dbReference type="NCBI Taxonomy" id="145286"/>
    <lineage>
        <taxon>Eukaryota</taxon>
        <taxon>Viridiplantae</taxon>
        <taxon>Streptophyta</taxon>
        <taxon>Embryophyta</taxon>
        <taxon>Tracheophyta</taxon>
        <taxon>Spermatophyta</taxon>
        <taxon>Magnoliopsida</taxon>
        <taxon>Austrobaileyales</taxon>
        <taxon>Schisandraceae</taxon>
        <taxon>Illicium</taxon>
    </lineage>
</organism>
<geneLocation type="chloroplast"/>
<protein>
    <recommendedName>
        <fullName evidence="1">DNA-directed RNA polymerase subunit beta</fullName>
        <ecNumber evidence="1">2.7.7.6</ecNumber>
    </recommendedName>
    <alternativeName>
        <fullName evidence="1">PEP</fullName>
    </alternativeName>
    <alternativeName>
        <fullName evidence="1">Plastid-encoded RNA polymerase subunit beta</fullName>
        <shortName evidence="1">RNA polymerase subunit beta</shortName>
    </alternativeName>
</protein>
<proteinExistence type="inferred from homology"/>
<reference key="1">
    <citation type="journal article" date="2007" name="Mol. Phylogenet. Evol.">
        <title>Phylogenetic and evolutionary implications of complete chloroplast genome sequences of four early-diverging angiosperms: Buxus (Buxaceae), Chloranthus (Chloranthaceae), Dioscorea (Dioscoreaceae), and Illicium (Schisandraceae).</title>
        <authorList>
            <person name="Hansen D.R."/>
            <person name="Dastidar S.G."/>
            <person name="Cai Z."/>
            <person name="Penaflor C."/>
            <person name="Kuehl J.V."/>
            <person name="Boore J.L."/>
            <person name="Jansen R.K."/>
        </authorList>
    </citation>
    <scope>NUCLEOTIDE SEQUENCE [LARGE SCALE GENOMIC DNA]</scope>
</reference>
<gene>
    <name evidence="1" type="primary">rpoB</name>
</gene>
<dbReference type="EC" id="2.7.7.6" evidence="1"/>
<dbReference type="EMBL" id="EF380354">
    <property type="protein sequence ID" value="ABQ52511.1"/>
    <property type="status" value="ALT_INIT"/>
    <property type="molecule type" value="Genomic_DNA"/>
</dbReference>
<dbReference type="RefSeq" id="YP_001294262.1">
    <property type="nucleotide sequence ID" value="NC_009600.1"/>
</dbReference>
<dbReference type="SMR" id="A6MMT6"/>
<dbReference type="GeneID" id="5236720"/>
<dbReference type="GO" id="GO:0009507">
    <property type="term" value="C:chloroplast"/>
    <property type="evidence" value="ECO:0007669"/>
    <property type="project" value="UniProtKB-SubCell"/>
</dbReference>
<dbReference type="GO" id="GO:0000428">
    <property type="term" value="C:DNA-directed RNA polymerase complex"/>
    <property type="evidence" value="ECO:0007669"/>
    <property type="project" value="UniProtKB-KW"/>
</dbReference>
<dbReference type="GO" id="GO:0005739">
    <property type="term" value="C:mitochondrion"/>
    <property type="evidence" value="ECO:0007669"/>
    <property type="project" value="GOC"/>
</dbReference>
<dbReference type="GO" id="GO:0003677">
    <property type="term" value="F:DNA binding"/>
    <property type="evidence" value="ECO:0007669"/>
    <property type="project" value="UniProtKB-UniRule"/>
</dbReference>
<dbReference type="GO" id="GO:0003899">
    <property type="term" value="F:DNA-directed RNA polymerase activity"/>
    <property type="evidence" value="ECO:0007669"/>
    <property type="project" value="UniProtKB-UniRule"/>
</dbReference>
<dbReference type="GO" id="GO:0032549">
    <property type="term" value="F:ribonucleoside binding"/>
    <property type="evidence" value="ECO:0007669"/>
    <property type="project" value="InterPro"/>
</dbReference>
<dbReference type="GO" id="GO:0006351">
    <property type="term" value="P:DNA-templated transcription"/>
    <property type="evidence" value="ECO:0007669"/>
    <property type="project" value="UniProtKB-UniRule"/>
</dbReference>
<dbReference type="CDD" id="cd00653">
    <property type="entry name" value="RNA_pol_B_RPB2"/>
    <property type="match status" value="1"/>
</dbReference>
<dbReference type="FunFam" id="3.90.1110.10:FF:000009">
    <property type="entry name" value="DNA-directed RNA polymerase subunit beta"/>
    <property type="match status" value="1"/>
</dbReference>
<dbReference type="Gene3D" id="2.40.50.100">
    <property type="match status" value="1"/>
</dbReference>
<dbReference type="Gene3D" id="2.40.50.150">
    <property type="match status" value="1"/>
</dbReference>
<dbReference type="Gene3D" id="3.90.1100.10">
    <property type="match status" value="1"/>
</dbReference>
<dbReference type="Gene3D" id="2.30.150.10">
    <property type="entry name" value="DNA-directed RNA polymerase, beta subunit, external 1 domain"/>
    <property type="match status" value="1"/>
</dbReference>
<dbReference type="Gene3D" id="2.40.270.10">
    <property type="entry name" value="DNA-directed RNA polymerase, subunit 2, domain 6"/>
    <property type="match status" value="2"/>
</dbReference>
<dbReference type="Gene3D" id="3.90.1800.10">
    <property type="entry name" value="RNA polymerase alpha subunit dimerisation domain"/>
    <property type="match status" value="1"/>
</dbReference>
<dbReference type="Gene3D" id="3.90.1110.10">
    <property type="entry name" value="RNA polymerase Rpb2, domain 2"/>
    <property type="match status" value="1"/>
</dbReference>
<dbReference type="HAMAP" id="MF_01321">
    <property type="entry name" value="RNApol_bact_RpoB"/>
    <property type="match status" value="1"/>
</dbReference>
<dbReference type="InterPro" id="IPR042107">
    <property type="entry name" value="DNA-dir_RNA_pol_bsu_ext_1_sf"/>
</dbReference>
<dbReference type="InterPro" id="IPR015712">
    <property type="entry name" value="DNA-dir_RNA_pol_su2"/>
</dbReference>
<dbReference type="InterPro" id="IPR007120">
    <property type="entry name" value="DNA-dir_RNAP_su2_dom"/>
</dbReference>
<dbReference type="InterPro" id="IPR037033">
    <property type="entry name" value="DNA-dir_RNAP_su2_hyb_sf"/>
</dbReference>
<dbReference type="InterPro" id="IPR010243">
    <property type="entry name" value="RNA_pol_bsu_bac"/>
</dbReference>
<dbReference type="InterPro" id="IPR007121">
    <property type="entry name" value="RNA_pol_bsu_CS"/>
</dbReference>
<dbReference type="InterPro" id="IPR007642">
    <property type="entry name" value="RNA_pol_Rpb2_2"/>
</dbReference>
<dbReference type="InterPro" id="IPR037034">
    <property type="entry name" value="RNA_pol_Rpb2_2_sf"/>
</dbReference>
<dbReference type="InterPro" id="IPR007645">
    <property type="entry name" value="RNA_pol_Rpb2_3"/>
</dbReference>
<dbReference type="InterPro" id="IPR007641">
    <property type="entry name" value="RNA_pol_Rpb2_7"/>
</dbReference>
<dbReference type="InterPro" id="IPR014724">
    <property type="entry name" value="RNA_pol_RPB2_OB-fold"/>
</dbReference>
<dbReference type="NCBIfam" id="NF001616">
    <property type="entry name" value="PRK00405.1"/>
    <property type="match status" value="1"/>
</dbReference>
<dbReference type="PANTHER" id="PTHR20856">
    <property type="entry name" value="DNA-DIRECTED RNA POLYMERASE I SUBUNIT 2"/>
    <property type="match status" value="1"/>
</dbReference>
<dbReference type="Pfam" id="PF04561">
    <property type="entry name" value="RNA_pol_Rpb2_2"/>
    <property type="match status" value="1"/>
</dbReference>
<dbReference type="Pfam" id="PF04565">
    <property type="entry name" value="RNA_pol_Rpb2_3"/>
    <property type="match status" value="1"/>
</dbReference>
<dbReference type="Pfam" id="PF00562">
    <property type="entry name" value="RNA_pol_Rpb2_6"/>
    <property type="match status" value="1"/>
</dbReference>
<dbReference type="Pfam" id="PF04560">
    <property type="entry name" value="RNA_pol_Rpb2_7"/>
    <property type="match status" value="1"/>
</dbReference>
<dbReference type="SUPFAM" id="SSF64484">
    <property type="entry name" value="beta and beta-prime subunits of DNA dependent RNA-polymerase"/>
    <property type="match status" value="1"/>
</dbReference>
<dbReference type="PROSITE" id="PS01166">
    <property type="entry name" value="RNA_POL_BETA"/>
    <property type="match status" value="1"/>
</dbReference>
<accession>A6MMT6</accession>
<evidence type="ECO:0000255" key="1">
    <source>
        <dbReference type="HAMAP-Rule" id="MF_01321"/>
    </source>
</evidence>
<evidence type="ECO:0000305" key="2"/>
<name>RPOB_ILLOL</name>
<comment type="function">
    <text evidence="1">DNA-dependent RNA polymerase catalyzes the transcription of DNA into RNA using the four ribonucleoside triphosphates as substrates.</text>
</comment>
<comment type="catalytic activity">
    <reaction evidence="1">
        <text>RNA(n) + a ribonucleoside 5'-triphosphate = RNA(n+1) + diphosphate</text>
        <dbReference type="Rhea" id="RHEA:21248"/>
        <dbReference type="Rhea" id="RHEA-COMP:14527"/>
        <dbReference type="Rhea" id="RHEA-COMP:17342"/>
        <dbReference type="ChEBI" id="CHEBI:33019"/>
        <dbReference type="ChEBI" id="CHEBI:61557"/>
        <dbReference type="ChEBI" id="CHEBI:140395"/>
        <dbReference type="EC" id="2.7.7.6"/>
    </reaction>
</comment>
<comment type="subunit">
    <text evidence="1">In plastids the minimal PEP RNA polymerase catalytic core is composed of four subunits: alpha, beta, beta', and beta''. When a (nuclear-encoded) sigma factor is associated with the core the holoenzyme is formed, which can initiate transcription.</text>
</comment>
<comment type="subcellular location">
    <subcellularLocation>
        <location>Plastid</location>
        <location>Chloroplast</location>
    </subcellularLocation>
</comment>
<comment type="similarity">
    <text evidence="1">Belongs to the RNA polymerase beta chain family.</text>
</comment>
<comment type="sequence caution" evidence="2">
    <conflict type="erroneous initiation">
        <sequence resource="EMBL-CDS" id="ABQ52511"/>
    </conflict>
</comment>
<feature type="chain" id="PRO_0000300445" description="DNA-directed RNA polymerase subunit beta">
    <location>
        <begin position="1"/>
        <end position="1070"/>
    </location>
</feature>
<keyword id="KW-0150">Chloroplast</keyword>
<keyword id="KW-0240">DNA-directed RNA polymerase</keyword>
<keyword id="KW-0548">Nucleotidyltransferase</keyword>
<keyword id="KW-0934">Plastid</keyword>
<keyword id="KW-0804">Transcription</keyword>
<keyword id="KW-0808">Transferase</keyword>
<sequence length="1070" mass="120470">MLRDGNEGMSTIPGSSQIQFEGFCKFIDQGLAEELHKFPKMEDTDQEMEFQLFVETYQLVEPLIKERDAVYESLTYSSELYVSAGLIWRAGRDMRKQTVFIGNIPLMNSLGTSLVNGIYRIVVNQILQSPGIYYRSELDHNGISVYTGTIISDWGGRSELEIDRKARIWARVSRKQKISILVPSSAMGSNLRDILDNVCYPEIFLSFPNDKEKKKIGSKENAVLEFYQQFACVGGDPVFSESLCKELQKKFFQQRCELGRIGRRNMNQRLNLDIPQNSTFLLPRDVLAAADHLIGMKFGMGTLDDLNHLKNKRIRSVADLLQDQFGLALVRLENVVRGTICGAIRHKLIPTPHNLVTSTPLTTTYESFFGLHPLSQVLDRTNPLTQIVHGRKWSYLGPGGLTGRTASFRIRDIHPSHYGRICPIDTSEGINVGLIGSLAIHARIGDWGSIESPFYEISERLKEEQMVYLSPRRDEYYMVAAGNSLALNRGIQEEQVVPARYRQEFLTIAWEQIHLRSIYPFQYFSIGASLIPFIEHNDANRALMSSNMQRQAVPLSHSEKCIVGTGLERQAALDSGGSAIAEHEGKITYTDTEKIVLSGNGDTISIPLVMYQRSNKNTCMHQKPQVHRGKCVKKGQILADGAAIIGGELALGKNILVAYMPWEGYNSEDAVLISERLVYGDIYTSFHIRKYEIQTHVTSQGPERITNEIPHLEAHLLRNLDKNGIVMLGSWVETGDILVGKLTPQTAKESSYAPEDRLLRAILGIQVSTAKETCLKLPIGGRGRVIDVRWIQKKRGSSSNPETIRVYISQKREIKVGDKVAGRHGNKGIISKILPRQDMPYLQDGTPVDMVFNPLGIPSRMNVGQMFECSIGLAGNLLNRHYRIIPFDERYEQEASRKLVFPELYKASKQTANPWVFEPEYPGKSRIFDGRTGDPFEQPVIIGKSYMMKLIHQVDDKIHGRSSGHYALVTQQPLRGRAKHGGQRVGEMEVWALEGFGVAHISQEMLTYKSDHIRARQEVLGTTIIGGTIPNPDGAPESFRLLVRELRSLALELNHFLVSEKSFQINRKEA</sequence>